<accession>C1CXE7</accession>
<organism>
    <name type="scientific">Deinococcus deserti (strain DSM 17065 / CIP 109153 / LMG 22923 / VCD115)</name>
    <dbReference type="NCBI Taxonomy" id="546414"/>
    <lineage>
        <taxon>Bacteria</taxon>
        <taxon>Thermotogati</taxon>
        <taxon>Deinococcota</taxon>
        <taxon>Deinococci</taxon>
        <taxon>Deinococcales</taxon>
        <taxon>Deinococcaceae</taxon>
        <taxon>Deinococcus</taxon>
    </lineage>
</organism>
<feature type="chain" id="PRO_1000214698" description="Large ribosomal subunit protein uL15">
    <location>
        <begin position="1"/>
        <end position="154"/>
    </location>
</feature>
<feature type="region of interest" description="Disordered" evidence="2">
    <location>
        <begin position="1"/>
        <end position="52"/>
    </location>
</feature>
<feature type="compositionally biased region" description="Basic and acidic residues" evidence="2">
    <location>
        <begin position="1"/>
        <end position="13"/>
    </location>
</feature>
<keyword id="KW-1185">Reference proteome</keyword>
<keyword id="KW-0687">Ribonucleoprotein</keyword>
<keyword id="KW-0689">Ribosomal protein</keyword>
<keyword id="KW-0694">RNA-binding</keyword>
<keyword id="KW-0699">rRNA-binding</keyword>
<name>RL15_DEIDV</name>
<protein>
    <recommendedName>
        <fullName evidence="1">Large ribosomal subunit protein uL15</fullName>
    </recommendedName>
    <alternativeName>
        <fullName evidence="3">50S ribosomal protein L15</fullName>
    </alternativeName>
</protein>
<reference key="1">
    <citation type="journal article" date="2009" name="PLoS Genet.">
        <title>Alliance of proteomics and genomics to unravel the specificities of Sahara bacterium Deinococcus deserti.</title>
        <authorList>
            <person name="de Groot A."/>
            <person name="Dulermo R."/>
            <person name="Ortet P."/>
            <person name="Blanchard L."/>
            <person name="Guerin P."/>
            <person name="Fernandez B."/>
            <person name="Vacherie B."/>
            <person name="Dossat C."/>
            <person name="Jolivet E."/>
            <person name="Siguier P."/>
            <person name="Chandler M."/>
            <person name="Barakat M."/>
            <person name="Dedieu A."/>
            <person name="Barbe V."/>
            <person name="Heulin T."/>
            <person name="Sommer S."/>
            <person name="Achouak W."/>
            <person name="Armengaud J."/>
        </authorList>
    </citation>
    <scope>NUCLEOTIDE SEQUENCE [LARGE SCALE GENOMIC DNA]</scope>
    <source>
        <strain>DSM 17065 / CIP 109153 / LMG 22923 / VCD115</strain>
    </source>
</reference>
<proteinExistence type="inferred from homology"/>
<comment type="function">
    <text evidence="1">Binds to the 23S rRNA.</text>
</comment>
<comment type="subunit">
    <text evidence="1">Part of the 50S ribosomal subunit.</text>
</comment>
<comment type="similarity">
    <text evidence="1">Belongs to the universal ribosomal protein uL15 family.</text>
</comment>
<evidence type="ECO:0000255" key="1">
    <source>
        <dbReference type="HAMAP-Rule" id="MF_01341"/>
    </source>
</evidence>
<evidence type="ECO:0000256" key="2">
    <source>
        <dbReference type="SAM" id="MobiDB-lite"/>
    </source>
</evidence>
<evidence type="ECO:0000305" key="3"/>
<gene>
    <name evidence="1" type="primary">rplO</name>
    <name type="ordered locus">Deide_18760</name>
</gene>
<dbReference type="EMBL" id="CP001114">
    <property type="protein sequence ID" value="ACO46864.1"/>
    <property type="molecule type" value="Genomic_DNA"/>
</dbReference>
<dbReference type="RefSeq" id="WP_012693986.1">
    <property type="nucleotide sequence ID" value="NC_012526.1"/>
</dbReference>
<dbReference type="SMR" id="C1CXE7"/>
<dbReference type="STRING" id="546414.Deide_18760"/>
<dbReference type="PaxDb" id="546414-Deide_18760"/>
<dbReference type="KEGG" id="ddr:Deide_18760"/>
<dbReference type="eggNOG" id="COG0200">
    <property type="taxonomic scope" value="Bacteria"/>
</dbReference>
<dbReference type="HOGENOM" id="CLU_055188_4_0_0"/>
<dbReference type="OrthoDB" id="9810293at2"/>
<dbReference type="Proteomes" id="UP000002208">
    <property type="component" value="Chromosome"/>
</dbReference>
<dbReference type="GO" id="GO:0022625">
    <property type="term" value="C:cytosolic large ribosomal subunit"/>
    <property type="evidence" value="ECO:0007669"/>
    <property type="project" value="TreeGrafter"/>
</dbReference>
<dbReference type="GO" id="GO:0019843">
    <property type="term" value="F:rRNA binding"/>
    <property type="evidence" value="ECO:0007669"/>
    <property type="project" value="UniProtKB-UniRule"/>
</dbReference>
<dbReference type="GO" id="GO:0003735">
    <property type="term" value="F:structural constituent of ribosome"/>
    <property type="evidence" value="ECO:0007669"/>
    <property type="project" value="InterPro"/>
</dbReference>
<dbReference type="GO" id="GO:0006412">
    <property type="term" value="P:translation"/>
    <property type="evidence" value="ECO:0007669"/>
    <property type="project" value="UniProtKB-UniRule"/>
</dbReference>
<dbReference type="Gene3D" id="3.100.10.10">
    <property type="match status" value="1"/>
</dbReference>
<dbReference type="HAMAP" id="MF_01341">
    <property type="entry name" value="Ribosomal_uL15"/>
    <property type="match status" value="1"/>
</dbReference>
<dbReference type="InterPro" id="IPR030878">
    <property type="entry name" value="Ribosomal_uL15"/>
</dbReference>
<dbReference type="InterPro" id="IPR021131">
    <property type="entry name" value="Ribosomal_uL15/eL18"/>
</dbReference>
<dbReference type="InterPro" id="IPR036227">
    <property type="entry name" value="Ribosomal_uL15/eL18_sf"/>
</dbReference>
<dbReference type="InterPro" id="IPR005749">
    <property type="entry name" value="Ribosomal_uL15_bac-type"/>
</dbReference>
<dbReference type="InterPro" id="IPR001196">
    <property type="entry name" value="Ribosomal_uL15_CS"/>
</dbReference>
<dbReference type="NCBIfam" id="TIGR01071">
    <property type="entry name" value="rplO_bact"/>
    <property type="match status" value="1"/>
</dbReference>
<dbReference type="PANTHER" id="PTHR12934">
    <property type="entry name" value="50S RIBOSOMAL PROTEIN L15"/>
    <property type="match status" value="1"/>
</dbReference>
<dbReference type="PANTHER" id="PTHR12934:SF11">
    <property type="entry name" value="LARGE RIBOSOMAL SUBUNIT PROTEIN UL15M"/>
    <property type="match status" value="1"/>
</dbReference>
<dbReference type="Pfam" id="PF00828">
    <property type="entry name" value="Ribosomal_L27A"/>
    <property type="match status" value="1"/>
</dbReference>
<dbReference type="SUPFAM" id="SSF52080">
    <property type="entry name" value="Ribosomal proteins L15p and L18e"/>
    <property type="match status" value="1"/>
</dbReference>
<dbReference type="PROSITE" id="PS00475">
    <property type="entry name" value="RIBOSOMAL_L15"/>
    <property type="match status" value="1"/>
</dbReference>
<sequence length="154" mass="16300">MKLHELKPAEGSRKNRKRVGRGPGGTDKTAGRGHKGQKSRSGAGKGSFFEGGRSSLISRLPKRGFNNVGTTYEVIQLGQLDVLEGDTFNREALELAGLVRRKNRPVKLLATGEVTRAVTVHVDAASAAAVKAVEAAGGKVILPNSQTEDAQKAE</sequence>